<organism>
    <name type="scientific">Lactobacillus gasseri (strain ATCC 33323 / DSM 20243 / BCRC 14619 / CIP 102991 / JCM 1131 / KCTC 3163 / NCIMB 11718 / NCTC 13722 / AM63)</name>
    <dbReference type="NCBI Taxonomy" id="324831"/>
    <lineage>
        <taxon>Bacteria</taxon>
        <taxon>Bacillati</taxon>
        <taxon>Bacillota</taxon>
        <taxon>Bacilli</taxon>
        <taxon>Lactobacillales</taxon>
        <taxon>Lactobacillaceae</taxon>
        <taxon>Lactobacillus</taxon>
    </lineage>
</organism>
<sequence length="207" mass="23048">MTEPHANKQLEILRFIYDTVEERAFPPTVREICSAVDLSSTSTVHGHLARLEKKGYILKDATKPRAIEVTEKGREALGIKPKDIPIVGVVTAGQPILAVQDIDEYFPLPPDLENDAGELFMLRVHGESMINAGILNGDHVIVRKQSSANNGEIVVAMTEDNEATVKRFFKEDGYYRLQPENDTMDPIILPVVQILGKVVGLYRNNID</sequence>
<gene>
    <name evidence="1" type="primary">lexA</name>
    <name type="ordered locus">LGAS_0793</name>
</gene>
<comment type="function">
    <text evidence="1">Represses a number of genes involved in the response to DNA damage (SOS response), including recA and lexA. In the presence of single-stranded DNA, RecA interacts with LexA causing an autocatalytic cleavage which disrupts the DNA-binding part of LexA, leading to derepression of the SOS regulon and eventually DNA repair.</text>
</comment>
<comment type="catalytic activity">
    <reaction evidence="1">
        <text>Hydrolysis of Ala-|-Gly bond in repressor LexA.</text>
        <dbReference type="EC" id="3.4.21.88"/>
    </reaction>
</comment>
<comment type="subunit">
    <text evidence="1">Homodimer.</text>
</comment>
<comment type="similarity">
    <text evidence="1">Belongs to the peptidase S24 family.</text>
</comment>
<protein>
    <recommendedName>
        <fullName evidence="1">LexA repressor</fullName>
        <ecNumber evidence="1">3.4.21.88</ecNumber>
    </recommendedName>
</protein>
<proteinExistence type="inferred from homology"/>
<dbReference type="EC" id="3.4.21.88" evidence="1"/>
<dbReference type="EMBL" id="CP000413">
    <property type="protein sequence ID" value="ABJ60184.1"/>
    <property type="molecule type" value="Genomic_DNA"/>
</dbReference>
<dbReference type="RefSeq" id="WP_003647498.1">
    <property type="nucleotide sequence ID" value="NZ_WBMG01000005.1"/>
</dbReference>
<dbReference type="SMR" id="Q044D8"/>
<dbReference type="MEROPS" id="S24.001"/>
<dbReference type="GeneID" id="48924763"/>
<dbReference type="KEGG" id="lga:LGAS_0793"/>
<dbReference type="HOGENOM" id="CLU_066192_45_1_9"/>
<dbReference type="BioCyc" id="LGAS324831:G1G6Y-787-MONOMER"/>
<dbReference type="Proteomes" id="UP000000664">
    <property type="component" value="Chromosome"/>
</dbReference>
<dbReference type="GO" id="GO:0003677">
    <property type="term" value="F:DNA binding"/>
    <property type="evidence" value="ECO:0007669"/>
    <property type="project" value="UniProtKB-UniRule"/>
</dbReference>
<dbReference type="GO" id="GO:0004252">
    <property type="term" value="F:serine-type endopeptidase activity"/>
    <property type="evidence" value="ECO:0007669"/>
    <property type="project" value="UniProtKB-UniRule"/>
</dbReference>
<dbReference type="GO" id="GO:0006281">
    <property type="term" value="P:DNA repair"/>
    <property type="evidence" value="ECO:0007669"/>
    <property type="project" value="UniProtKB-UniRule"/>
</dbReference>
<dbReference type="GO" id="GO:0006260">
    <property type="term" value="P:DNA replication"/>
    <property type="evidence" value="ECO:0007669"/>
    <property type="project" value="UniProtKB-UniRule"/>
</dbReference>
<dbReference type="GO" id="GO:0045892">
    <property type="term" value="P:negative regulation of DNA-templated transcription"/>
    <property type="evidence" value="ECO:0007669"/>
    <property type="project" value="UniProtKB-UniRule"/>
</dbReference>
<dbReference type="GO" id="GO:0006508">
    <property type="term" value="P:proteolysis"/>
    <property type="evidence" value="ECO:0007669"/>
    <property type="project" value="InterPro"/>
</dbReference>
<dbReference type="GO" id="GO:0009432">
    <property type="term" value="P:SOS response"/>
    <property type="evidence" value="ECO:0007669"/>
    <property type="project" value="UniProtKB-UniRule"/>
</dbReference>
<dbReference type="CDD" id="cd00090">
    <property type="entry name" value="HTH_ARSR"/>
    <property type="match status" value="1"/>
</dbReference>
<dbReference type="CDD" id="cd06529">
    <property type="entry name" value="S24_LexA-like"/>
    <property type="match status" value="1"/>
</dbReference>
<dbReference type="FunFam" id="2.10.109.10:FF:000001">
    <property type="entry name" value="LexA repressor"/>
    <property type="match status" value="1"/>
</dbReference>
<dbReference type="Gene3D" id="2.10.109.10">
    <property type="entry name" value="Umud Fragment, subunit A"/>
    <property type="match status" value="1"/>
</dbReference>
<dbReference type="Gene3D" id="1.10.10.10">
    <property type="entry name" value="Winged helix-like DNA-binding domain superfamily/Winged helix DNA-binding domain"/>
    <property type="match status" value="1"/>
</dbReference>
<dbReference type="HAMAP" id="MF_00015">
    <property type="entry name" value="LexA"/>
    <property type="match status" value="1"/>
</dbReference>
<dbReference type="InterPro" id="IPR011991">
    <property type="entry name" value="ArsR-like_HTH"/>
</dbReference>
<dbReference type="InterPro" id="IPR006200">
    <property type="entry name" value="LexA"/>
</dbReference>
<dbReference type="InterPro" id="IPR039418">
    <property type="entry name" value="LexA-like"/>
</dbReference>
<dbReference type="InterPro" id="IPR036286">
    <property type="entry name" value="LexA/Signal_pep-like_sf"/>
</dbReference>
<dbReference type="InterPro" id="IPR006199">
    <property type="entry name" value="LexA_DNA-bd_dom"/>
</dbReference>
<dbReference type="InterPro" id="IPR050077">
    <property type="entry name" value="LexA_repressor"/>
</dbReference>
<dbReference type="InterPro" id="IPR006197">
    <property type="entry name" value="Peptidase_S24_LexA"/>
</dbReference>
<dbReference type="InterPro" id="IPR015927">
    <property type="entry name" value="Peptidase_S24_S26A/B/C"/>
</dbReference>
<dbReference type="InterPro" id="IPR036388">
    <property type="entry name" value="WH-like_DNA-bd_sf"/>
</dbReference>
<dbReference type="InterPro" id="IPR036390">
    <property type="entry name" value="WH_DNA-bd_sf"/>
</dbReference>
<dbReference type="NCBIfam" id="TIGR00498">
    <property type="entry name" value="lexA"/>
    <property type="match status" value="1"/>
</dbReference>
<dbReference type="PANTHER" id="PTHR33516">
    <property type="entry name" value="LEXA REPRESSOR"/>
    <property type="match status" value="1"/>
</dbReference>
<dbReference type="PANTHER" id="PTHR33516:SF2">
    <property type="entry name" value="LEXA REPRESSOR-RELATED"/>
    <property type="match status" value="1"/>
</dbReference>
<dbReference type="Pfam" id="PF01726">
    <property type="entry name" value="LexA_DNA_bind"/>
    <property type="match status" value="1"/>
</dbReference>
<dbReference type="Pfam" id="PF00717">
    <property type="entry name" value="Peptidase_S24"/>
    <property type="match status" value="1"/>
</dbReference>
<dbReference type="PRINTS" id="PR00726">
    <property type="entry name" value="LEXASERPTASE"/>
</dbReference>
<dbReference type="SUPFAM" id="SSF51306">
    <property type="entry name" value="LexA/Signal peptidase"/>
    <property type="match status" value="1"/>
</dbReference>
<dbReference type="SUPFAM" id="SSF46785">
    <property type="entry name" value="Winged helix' DNA-binding domain"/>
    <property type="match status" value="1"/>
</dbReference>
<name>LEXA_LACGA</name>
<evidence type="ECO:0000255" key="1">
    <source>
        <dbReference type="HAMAP-Rule" id="MF_00015"/>
    </source>
</evidence>
<reference key="1">
    <citation type="journal article" date="2006" name="Proc. Natl. Acad. Sci. U.S.A.">
        <title>Comparative genomics of the lactic acid bacteria.</title>
        <authorList>
            <person name="Makarova K.S."/>
            <person name="Slesarev A."/>
            <person name="Wolf Y.I."/>
            <person name="Sorokin A."/>
            <person name="Mirkin B."/>
            <person name="Koonin E.V."/>
            <person name="Pavlov A."/>
            <person name="Pavlova N."/>
            <person name="Karamychev V."/>
            <person name="Polouchine N."/>
            <person name="Shakhova V."/>
            <person name="Grigoriev I."/>
            <person name="Lou Y."/>
            <person name="Rohksar D."/>
            <person name="Lucas S."/>
            <person name="Huang K."/>
            <person name="Goodstein D.M."/>
            <person name="Hawkins T."/>
            <person name="Plengvidhya V."/>
            <person name="Welker D."/>
            <person name="Hughes J."/>
            <person name="Goh Y."/>
            <person name="Benson A."/>
            <person name="Baldwin K."/>
            <person name="Lee J.-H."/>
            <person name="Diaz-Muniz I."/>
            <person name="Dosti B."/>
            <person name="Smeianov V."/>
            <person name="Wechter W."/>
            <person name="Barabote R."/>
            <person name="Lorca G."/>
            <person name="Altermann E."/>
            <person name="Barrangou R."/>
            <person name="Ganesan B."/>
            <person name="Xie Y."/>
            <person name="Rawsthorne H."/>
            <person name="Tamir D."/>
            <person name="Parker C."/>
            <person name="Breidt F."/>
            <person name="Broadbent J.R."/>
            <person name="Hutkins R."/>
            <person name="O'Sullivan D."/>
            <person name="Steele J."/>
            <person name="Unlu G."/>
            <person name="Saier M.H. Jr."/>
            <person name="Klaenhammer T."/>
            <person name="Richardson P."/>
            <person name="Kozyavkin S."/>
            <person name="Weimer B.C."/>
            <person name="Mills D.A."/>
        </authorList>
    </citation>
    <scope>NUCLEOTIDE SEQUENCE [LARGE SCALE GENOMIC DNA]</scope>
    <source>
        <strain>ATCC 33323 / DSM 20243 / BCRC 14619 / CIP 102991 / JCM 1131 / KCTC 3163 / NCIMB 11718 / NCTC 13722 / AM63</strain>
    </source>
</reference>
<keyword id="KW-0068">Autocatalytic cleavage</keyword>
<keyword id="KW-0227">DNA damage</keyword>
<keyword id="KW-0234">DNA repair</keyword>
<keyword id="KW-0235">DNA replication</keyword>
<keyword id="KW-0238">DNA-binding</keyword>
<keyword id="KW-0378">Hydrolase</keyword>
<keyword id="KW-0678">Repressor</keyword>
<keyword id="KW-0742">SOS response</keyword>
<keyword id="KW-0804">Transcription</keyword>
<keyword id="KW-0805">Transcription regulation</keyword>
<accession>Q044D8</accession>
<feature type="chain" id="PRO_1000001297" description="LexA repressor">
    <location>
        <begin position="1"/>
        <end position="207"/>
    </location>
</feature>
<feature type="DNA-binding region" description="H-T-H motif" evidence="1">
    <location>
        <begin position="29"/>
        <end position="49"/>
    </location>
</feature>
<feature type="active site" description="For autocatalytic cleavage activity" evidence="1">
    <location>
        <position position="128"/>
    </location>
</feature>
<feature type="active site" description="For autocatalytic cleavage activity" evidence="1">
    <location>
        <position position="166"/>
    </location>
</feature>
<feature type="site" description="Cleavage; by autolysis" evidence="1">
    <location>
        <begin position="92"/>
        <end position="93"/>
    </location>
</feature>